<reference key="1">
    <citation type="submission" date="2007-06" db="EMBL/GenBank/DDBJ databases">
        <authorList>
            <consortium name="NIH - Mammalian Gene Collection (MGC) project"/>
        </authorList>
    </citation>
    <scope>NUCLEOTIDE SEQUENCE [LARGE SCALE MRNA]</scope>
    <source>
        <strain>Hereford</strain>
        <tissue>Basal ganglia</tissue>
        <tissue>Fetal pons</tissue>
    </source>
</reference>
<name>RSMN_BOVIN</name>
<organism>
    <name type="scientific">Bos taurus</name>
    <name type="common">Bovine</name>
    <dbReference type="NCBI Taxonomy" id="9913"/>
    <lineage>
        <taxon>Eukaryota</taxon>
        <taxon>Metazoa</taxon>
        <taxon>Chordata</taxon>
        <taxon>Craniata</taxon>
        <taxon>Vertebrata</taxon>
        <taxon>Euteleostomi</taxon>
        <taxon>Mammalia</taxon>
        <taxon>Eutheria</taxon>
        <taxon>Laurasiatheria</taxon>
        <taxon>Artiodactyla</taxon>
        <taxon>Ruminantia</taxon>
        <taxon>Pecora</taxon>
        <taxon>Bovidae</taxon>
        <taxon>Bovinae</taxon>
        <taxon>Bos</taxon>
    </lineage>
</organism>
<accession>Q17QN3</accession>
<accession>A6QL65</accession>
<protein>
    <recommendedName>
        <fullName>Small nuclear ribonucleoprotein-associated protein N</fullName>
        <shortName>snRNP-N</shortName>
    </recommendedName>
    <alternativeName>
        <fullName>Sm protein N</fullName>
        <shortName>Sm-N</shortName>
        <shortName>SmN</shortName>
    </alternativeName>
</protein>
<keyword id="KW-0488">Methylation</keyword>
<keyword id="KW-0539">Nucleus</keyword>
<keyword id="KW-1185">Reference proteome</keyword>
<keyword id="KW-0677">Repeat</keyword>
<keyword id="KW-0687">Ribonucleoprotein</keyword>
<keyword id="KW-0694">RNA-binding</keyword>
<feature type="chain" id="PRO_0000249873" description="Small nuclear ribonucleoprotein-associated protein N">
    <location>
        <begin position="1"/>
        <end position="240"/>
    </location>
</feature>
<feature type="domain" description="Sm" evidence="5">
    <location>
        <begin position="4"/>
        <end position="86"/>
    </location>
</feature>
<feature type="repeat">
    <location>
        <begin position="175"/>
        <end position="181"/>
    </location>
</feature>
<feature type="repeat">
    <location>
        <begin position="191"/>
        <end position="196"/>
    </location>
</feature>
<feature type="repeat">
    <location>
        <begin position="216"/>
        <end position="221"/>
    </location>
</feature>
<feature type="repeat">
    <location>
        <begin position="222"/>
        <end position="228"/>
    </location>
</feature>
<feature type="repeat">
    <location>
        <begin position="230"/>
        <end position="236"/>
    </location>
</feature>
<feature type="region of interest" description="Disordered" evidence="6">
    <location>
        <begin position="165"/>
        <end position="240"/>
    </location>
</feature>
<feature type="region of interest" description="Repeat-rich region">
    <location>
        <begin position="175"/>
        <end position="236"/>
    </location>
</feature>
<feature type="compositionally biased region" description="Pro residues" evidence="6">
    <location>
        <begin position="183"/>
        <end position="205"/>
    </location>
</feature>
<feature type="compositionally biased region" description="Pro residues" evidence="6">
    <location>
        <begin position="214"/>
        <end position="240"/>
    </location>
</feature>
<feature type="modified residue" description="Asymmetric dimethylarginine; alternate" evidence="2">
    <location>
        <position position="108"/>
    </location>
</feature>
<feature type="modified residue" description="Dimethylated arginine; alternate" evidence="2">
    <location>
        <position position="108"/>
    </location>
</feature>
<feature type="modified residue" description="Omega-N-methylarginine; alternate" evidence="4">
    <location>
        <position position="108"/>
    </location>
</feature>
<feature type="modified residue" description="Asymmetric dimethylarginine; alternate" evidence="2">
    <location>
        <position position="112"/>
    </location>
</feature>
<feature type="modified residue" description="Dimethylated arginine; alternate" evidence="2">
    <location>
        <position position="112"/>
    </location>
</feature>
<feature type="modified residue" description="Omega-N-methylarginine; alternate" evidence="2">
    <location>
        <position position="112"/>
    </location>
</feature>
<feature type="modified residue" description="Omega-N-methylarginine" evidence="2">
    <location>
        <position position="147"/>
    </location>
</feature>
<feature type="modified residue" description="Omega-N-methylarginine" evidence="3">
    <location>
        <position position="172"/>
    </location>
</feature>
<dbReference type="EMBL" id="BC118260">
    <property type="protein sequence ID" value="AAI18261.1"/>
    <property type="molecule type" value="mRNA"/>
</dbReference>
<dbReference type="EMBL" id="BC147854">
    <property type="protein sequence ID" value="AAI47855.1"/>
    <property type="molecule type" value="mRNA"/>
</dbReference>
<dbReference type="RefSeq" id="NP_001073265.1">
    <property type="nucleotide sequence ID" value="NM_001079797.1"/>
</dbReference>
<dbReference type="SMR" id="Q17QN3"/>
<dbReference type="FunCoup" id="Q17QN3">
    <property type="interactions" value="1183"/>
</dbReference>
<dbReference type="STRING" id="9913.ENSBTAP00000010856"/>
<dbReference type="PaxDb" id="9913-ENSBTAP00000010856"/>
<dbReference type="Ensembl" id="ENSBTAT00000010856.7">
    <property type="protein sequence ID" value="ENSBTAP00000010856.5"/>
    <property type="gene ID" value="ENSBTAG00000008251.7"/>
</dbReference>
<dbReference type="GeneID" id="780877"/>
<dbReference type="KEGG" id="bta:780877"/>
<dbReference type="CTD" id="6638"/>
<dbReference type="VEuPathDB" id="HostDB:ENSBTAG00000008251"/>
<dbReference type="VGNC" id="VGNC:35082">
    <property type="gene designation" value="SNRPN"/>
</dbReference>
<dbReference type="eggNOG" id="KOG3168">
    <property type="taxonomic scope" value="Eukaryota"/>
</dbReference>
<dbReference type="GeneTree" id="ENSGT00940000158222"/>
<dbReference type="HOGENOM" id="CLU_076902_1_0_1"/>
<dbReference type="InParanoid" id="Q17QN3"/>
<dbReference type="OMA" id="MGTTKMV"/>
<dbReference type="OrthoDB" id="2020720at2759"/>
<dbReference type="TreeFam" id="TF314232"/>
<dbReference type="Reactome" id="R-BTA-111367">
    <property type="pathway name" value="SLBP independent Processing of Histone Pre-mRNAs"/>
</dbReference>
<dbReference type="Reactome" id="R-BTA-191859">
    <property type="pathway name" value="snRNP Assembly"/>
</dbReference>
<dbReference type="Reactome" id="R-BTA-72163">
    <property type="pathway name" value="mRNA Splicing - Major Pathway"/>
</dbReference>
<dbReference type="Reactome" id="R-BTA-72165">
    <property type="pathway name" value="mRNA Splicing - Minor Pathway"/>
</dbReference>
<dbReference type="Reactome" id="R-BTA-73856">
    <property type="pathway name" value="RNA Polymerase II Transcription Termination"/>
</dbReference>
<dbReference type="Reactome" id="R-BTA-77588">
    <property type="pathway name" value="SLBP Dependent Processing of Replication-Dependent Histone Pre-mRNAs"/>
</dbReference>
<dbReference type="Proteomes" id="UP000009136">
    <property type="component" value="Chromosome 21"/>
</dbReference>
<dbReference type="Bgee" id="ENSBTAG00000008251">
    <property type="expression patterns" value="Expressed in hypothalamus and 109 other cell types or tissues"/>
</dbReference>
<dbReference type="GO" id="GO:0071013">
    <property type="term" value="C:catalytic step 2 spliceosome"/>
    <property type="evidence" value="ECO:0000318"/>
    <property type="project" value="GO_Central"/>
</dbReference>
<dbReference type="GO" id="GO:0005737">
    <property type="term" value="C:cytoplasm"/>
    <property type="evidence" value="ECO:0000318"/>
    <property type="project" value="GO_Central"/>
</dbReference>
<dbReference type="GO" id="GO:0005654">
    <property type="term" value="C:nucleoplasm"/>
    <property type="evidence" value="ECO:0007669"/>
    <property type="project" value="Ensembl"/>
</dbReference>
<dbReference type="GO" id="GO:0005685">
    <property type="term" value="C:U1 snRNP"/>
    <property type="evidence" value="ECO:0000318"/>
    <property type="project" value="GO_Central"/>
</dbReference>
<dbReference type="GO" id="GO:0005686">
    <property type="term" value="C:U2 snRNP"/>
    <property type="evidence" value="ECO:0000318"/>
    <property type="project" value="GO_Central"/>
</dbReference>
<dbReference type="GO" id="GO:0071004">
    <property type="term" value="C:U2-type prespliceosome"/>
    <property type="evidence" value="ECO:0000318"/>
    <property type="project" value="GO_Central"/>
</dbReference>
<dbReference type="GO" id="GO:0005687">
    <property type="term" value="C:U4 snRNP"/>
    <property type="evidence" value="ECO:0000318"/>
    <property type="project" value="GO_Central"/>
</dbReference>
<dbReference type="GO" id="GO:0046540">
    <property type="term" value="C:U4/U6 x U5 tri-snRNP complex"/>
    <property type="evidence" value="ECO:0000318"/>
    <property type="project" value="GO_Central"/>
</dbReference>
<dbReference type="GO" id="GO:0005682">
    <property type="term" value="C:U5 snRNP"/>
    <property type="evidence" value="ECO:0000318"/>
    <property type="project" value="GO_Central"/>
</dbReference>
<dbReference type="GO" id="GO:0003723">
    <property type="term" value="F:RNA binding"/>
    <property type="evidence" value="ECO:0007669"/>
    <property type="project" value="UniProtKB-KW"/>
</dbReference>
<dbReference type="GO" id="GO:0070990">
    <property type="term" value="F:snRNP binding"/>
    <property type="evidence" value="ECO:0000318"/>
    <property type="project" value="GO_Central"/>
</dbReference>
<dbReference type="GO" id="GO:0000398">
    <property type="term" value="P:mRNA splicing, via spliceosome"/>
    <property type="evidence" value="ECO:0000318"/>
    <property type="project" value="GO_Central"/>
</dbReference>
<dbReference type="CDD" id="cd01717">
    <property type="entry name" value="Sm_B"/>
    <property type="match status" value="1"/>
</dbReference>
<dbReference type="FunFam" id="2.30.30.100:FF:000004">
    <property type="entry name" value="Small nuclear ribonucleoprotein-associated proteins"/>
    <property type="match status" value="1"/>
</dbReference>
<dbReference type="Gene3D" id="2.30.30.100">
    <property type="match status" value="1"/>
</dbReference>
<dbReference type="InterPro" id="IPR010920">
    <property type="entry name" value="LSM_dom_sf"/>
</dbReference>
<dbReference type="InterPro" id="IPR047575">
    <property type="entry name" value="Sm"/>
</dbReference>
<dbReference type="InterPro" id="IPR001163">
    <property type="entry name" value="Sm_dom_euk/arc"/>
</dbReference>
<dbReference type="InterPro" id="IPR017131">
    <property type="entry name" value="snRNP-assoc_SmB/SmN"/>
</dbReference>
<dbReference type="PANTHER" id="PTHR14508">
    <property type="entry name" value="SNRPN UPSTREAM READING FRAME PROTEIN, SNURF"/>
    <property type="match status" value="1"/>
</dbReference>
<dbReference type="PANTHER" id="PTHR14508:SF2">
    <property type="entry name" value="SNRPN UPSTREAM READING FRAME PROTEIN-RELATED"/>
    <property type="match status" value="1"/>
</dbReference>
<dbReference type="Pfam" id="PF01423">
    <property type="entry name" value="LSM"/>
    <property type="match status" value="1"/>
</dbReference>
<dbReference type="PIRSF" id="PIRSF037187">
    <property type="entry name" value="snRNP_SmB/SmN"/>
    <property type="match status" value="1"/>
</dbReference>
<dbReference type="SMART" id="SM00651">
    <property type="entry name" value="Sm"/>
    <property type="match status" value="1"/>
</dbReference>
<dbReference type="SUPFAM" id="SSF50182">
    <property type="entry name" value="Sm-like ribonucleoproteins"/>
    <property type="match status" value="1"/>
</dbReference>
<dbReference type="PROSITE" id="PS52002">
    <property type="entry name" value="SM"/>
    <property type="match status" value="1"/>
</dbReference>
<comment type="function">
    <text evidence="1">May be involved in tissue-specific alternative RNA processing events.</text>
</comment>
<comment type="subunit">
    <text evidence="1">Interacts with TDRD3.</text>
</comment>
<comment type="subcellular location">
    <subcellularLocation>
        <location evidence="1">Nucleus</location>
    </subcellularLocation>
</comment>
<comment type="miscellaneous">
    <text>Encoded on a bicistronic transcript that code for two proteins, SNRPN and SNURF.</text>
</comment>
<comment type="similarity">
    <text evidence="7">Belongs to the snRNP SmB/SmN family.</text>
</comment>
<sequence length="240" mass="24622">MTVGKSSKMLQHIDYRMRCILQDGRIFIGTFKAFDKHMNLILCDCDEFRKIKPKNAKQPEREEKRVLGLVLLRGENLVSMTVEGPPPKDTGIARVPLAGAAGGPGVGRAAGRGVPAGVPIPQAPAGLAGPVRGVGGPSQQVMTPQGRGTVAAAAVAATASIAGAPTQYPPGRGTAPTPVGRATPPPGIMAPPPGMRPPMGPPIGLPPTRGTPIGMPPPGMRPPPPGIRGPPPPGMRPPRP</sequence>
<proteinExistence type="evidence at transcript level"/>
<evidence type="ECO:0000250" key="1"/>
<evidence type="ECO:0000250" key="2">
    <source>
        <dbReference type="UniProtKB" id="P14678"/>
    </source>
</evidence>
<evidence type="ECO:0000250" key="3">
    <source>
        <dbReference type="UniProtKB" id="P63162"/>
    </source>
</evidence>
<evidence type="ECO:0000250" key="4">
    <source>
        <dbReference type="UniProtKB" id="P63163"/>
    </source>
</evidence>
<evidence type="ECO:0000255" key="5">
    <source>
        <dbReference type="PROSITE-ProRule" id="PRU01346"/>
    </source>
</evidence>
<evidence type="ECO:0000256" key="6">
    <source>
        <dbReference type="SAM" id="MobiDB-lite"/>
    </source>
</evidence>
<evidence type="ECO:0000305" key="7"/>
<gene>
    <name type="primary">SNRPN</name>
</gene>